<name>AROC_AKKM8</name>
<evidence type="ECO:0000255" key="1">
    <source>
        <dbReference type="HAMAP-Rule" id="MF_00300"/>
    </source>
</evidence>
<dbReference type="EC" id="4.2.3.5" evidence="1"/>
<dbReference type="EMBL" id="CP001071">
    <property type="protein sequence ID" value="ACD05711.1"/>
    <property type="molecule type" value="Genomic_DNA"/>
</dbReference>
<dbReference type="RefSeq" id="WP_012420925.1">
    <property type="nucleotide sequence ID" value="NZ_CP071807.1"/>
</dbReference>
<dbReference type="SMR" id="B2UNJ5"/>
<dbReference type="STRING" id="349741.Amuc_1897"/>
<dbReference type="PaxDb" id="349741-Amuc_1897"/>
<dbReference type="GeneID" id="60881484"/>
<dbReference type="KEGG" id="amu:Amuc_1897"/>
<dbReference type="eggNOG" id="COG0082">
    <property type="taxonomic scope" value="Bacteria"/>
</dbReference>
<dbReference type="HOGENOM" id="CLU_034547_0_1_0"/>
<dbReference type="OrthoDB" id="9771806at2"/>
<dbReference type="BioCyc" id="AMUC349741:G1GBX-2023-MONOMER"/>
<dbReference type="UniPathway" id="UPA00053">
    <property type="reaction ID" value="UER00090"/>
</dbReference>
<dbReference type="Proteomes" id="UP000001031">
    <property type="component" value="Chromosome"/>
</dbReference>
<dbReference type="GO" id="GO:0005829">
    <property type="term" value="C:cytosol"/>
    <property type="evidence" value="ECO:0007669"/>
    <property type="project" value="TreeGrafter"/>
</dbReference>
<dbReference type="GO" id="GO:0004107">
    <property type="term" value="F:chorismate synthase activity"/>
    <property type="evidence" value="ECO:0007669"/>
    <property type="project" value="UniProtKB-UniRule"/>
</dbReference>
<dbReference type="GO" id="GO:0010181">
    <property type="term" value="F:FMN binding"/>
    <property type="evidence" value="ECO:0007669"/>
    <property type="project" value="TreeGrafter"/>
</dbReference>
<dbReference type="GO" id="GO:0008652">
    <property type="term" value="P:amino acid biosynthetic process"/>
    <property type="evidence" value="ECO:0007669"/>
    <property type="project" value="UniProtKB-KW"/>
</dbReference>
<dbReference type="GO" id="GO:0009073">
    <property type="term" value="P:aromatic amino acid family biosynthetic process"/>
    <property type="evidence" value="ECO:0007669"/>
    <property type="project" value="UniProtKB-KW"/>
</dbReference>
<dbReference type="GO" id="GO:0009423">
    <property type="term" value="P:chorismate biosynthetic process"/>
    <property type="evidence" value="ECO:0007669"/>
    <property type="project" value="UniProtKB-UniRule"/>
</dbReference>
<dbReference type="CDD" id="cd07304">
    <property type="entry name" value="Chorismate_synthase"/>
    <property type="match status" value="1"/>
</dbReference>
<dbReference type="FunFam" id="3.60.150.10:FF:000003">
    <property type="entry name" value="Chorismate synthase"/>
    <property type="match status" value="1"/>
</dbReference>
<dbReference type="Gene3D" id="3.60.150.10">
    <property type="entry name" value="Chorismate synthase AroC"/>
    <property type="match status" value="1"/>
</dbReference>
<dbReference type="HAMAP" id="MF_00300">
    <property type="entry name" value="Chorismate_synth"/>
    <property type="match status" value="1"/>
</dbReference>
<dbReference type="InterPro" id="IPR000453">
    <property type="entry name" value="Chorismate_synth"/>
</dbReference>
<dbReference type="InterPro" id="IPR035904">
    <property type="entry name" value="Chorismate_synth_AroC_sf"/>
</dbReference>
<dbReference type="InterPro" id="IPR020541">
    <property type="entry name" value="Chorismate_synthase_CS"/>
</dbReference>
<dbReference type="NCBIfam" id="TIGR00033">
    <property type="entry name" value="aroC"/>
    <property type="match status" value="1"/>
</dbReference>
<dbReference type="NCBIfam" id="NF003793">
    <property type="entry name" value="PRK05382.1"/>
    <property type="match status" value="1"/>
</dbReference>
<dbReference type="PANTHER" id="PTHR21085">
    <property type="entry name" value="CHORISMATE SYNTHASE"/>
    <property type="match status" value="1"/>
</dbReference>
<dbReference type="PANTHER" id="PTHR21085:SF0">
    <property type="entry name" value="CHORISMATE SYNTHASE"/>
    <property type="match status" value="1"/>
</dbReference>
<dbReference type="Pfam" id="PF01264">
    <property type="entry name" value="Chorismate_synt"/>
    <property type="match status" value="1"/>
</dbReference>
<dbReference type="PIRSF" id="PIRSF001456">
    <property type="entry name" value="Chorismate_synth"/>
    <property type="match status" value="1"/>
</dbReference>
<dbReference type="SUPFAM" id="SSF103263">
    <property type="entry name" value="Chorismate synthase, AroC"/>
    <property type="match status" value="1"/>
</dbReference>
<dbReference type="PROSITE" id="PS00787">
    <property type="entry name" value="CHORISMATE_SYNTHASE_1"/>
    <property type="match status" value="1"/>
</dbReference>
<dbReference type="PROSITE" id="PS00788">
    <property type="entry name" value="CHORISMATE_SYNTHASE_2"/>
    <property type="match status" value="1"/>
</dbReference>
<reference key="1">
    <citation type="journal article" date="2011" name="PLoS ONE">
        <title>The genome of Akkermansia muciniphila, a dedicated intestinal mucin degrader, and its use in exploring intestinal metagenomes.</title>
        <authorList>
            <person name="van Passel M.W."/>
            <person name="Kant R."/>
            <person name="Zoetendal E.G."/>
            <person name="Plugge C.M."/>
            <person name="Derrien M."/>
            <person name="Malfatti S.A."/>
            <person name="Chain P.S."/>
            <person name="Woyke T."/>
            <person name="Palva A."/>
            <person name="de Vos W.M."/>
            <person name="Smidt H."/>
        </authorList>
    </citation>
    <scope>NUCLEOTIDE SEQUENCE [LARGE SCALE GENOMIC DNA]</scope>
    <source>
        <strain>ATCC BAA-835 / DSM 22959 / JCM 33894 / BCRC 81048 / CCUG 64013 / CIP 107961 / Muc</strain>
    </source>
</reference>
<gene>
    <name evidence="1" type="primary">aroC</name>
    <name type="ordered locus">Amuc_1897</name>
</gene>
<comment type="function">
    <text evidence="1">Catalyzes the anti-1,4-elimination of the C-3 phosphate and the C-6 proR hydrogen from 5-enolpyruvylshikimate-3-phosphate (EPSP) to yield chorismate, which is the branch point compound that serves as the starting substrate for the three terminal pathways of aromatic amino acid biosynthesis. This reaction introduces a second double bond into the aromatic ring system.</text>
</comment>
<comment type="catalytic activity">
    <reaction evidence="1">
        <text>5-O-(1-carboxyvinyl)-3-phosphoshikimate = chorismate + phosphate</text>
        <dbReference type="Rhea" id="RHEA:21020"/>
        <dbReference type="ChEBI" id="CHEBI:29748"/>
        <dbReference type="ChEBI" id="CHEBI:43474"/>
        <dbReference type="ChEBI" id="CHEBI:57701"/>
        <dbReference type="EC" id="4.2.3.5"/>
    </reaction>
</comment>
<comment type="cofactor">
    <cofactor evidence="1">
        <name>FMNH2</name>
        <dbReference type="ChEBI" id="CHEBI:57618"/>
    </cofactor>
    <text evidence="1">Reduced FMN (FMNH(2)).</text>
</comment>
<comment type="pathway">
    <text evidence="1">Metabolic intermediate biosynthesis; chorismate biosynthesis; chorismate from D-erythrose 4-phosphate and phosphoenolpyruvate: step 7/7.</text>
</comment>
<comment type="subunit">
    <text evidence="1">Homotetramer.</text>
</comment>
<comment type="similarity">
    <text evidence="1">Belongs to the chorismate synthase family.</text>
</comment>
<proteinExistence type="inferred from homology"/>
<keyword id="KW-0028">Amino-acid biosynthesis</keyword>
<keyword id="KW-0057">Aromatic amino acid biosynthesis</keyword>
<keyword id="KW-0274">FAD</keyword>
<keyword id="KW-0285">Flavoprotein</keyword>
<keyword id="KW-0288">FMN</keyword>
<keyword id="KW-0456">Lyase</keyword>
<keyword id="KW-0521">NADP</keyword>
<keyword id="KW-1185">Reference proteome</keyword>
<protein>
    <recommendedName>
        <fullName evidence="1">Chorismate synthase</fullName>
        <shortName evidence="1">CS</shortName>
        <ecNumber evidence="1">4.2.3.5</ecNumber>
    </recommendedName>
    <alternativeName>
        <fullName evidence="1">5-enolpyruvylshikimate-3-phosphate phospholyase</fullName>
    </alternativeName>
</protein>
<sequence>MSSSFGQVFRISTWGESHGTGVGVVIDGCPSLVPVTEEDIQRELDRRRPGQSDIVTPRREEDRAEILSGVLDGKTLGTPIAISVRNKDHRSSAYDEMARTYRPSHADYTYDAKYGIRAWAGGGRASARETIGRVAAGAVARAVLKQAFPDMEVVAWVDQVHHVKASVDWGAVTASAIESNIVRTADPSAAEAMIAAIKEARDSGNSLGGVVKCVVRGCPPGLGDPVFDKLDATLAHAMMSIPATKAFAVGSGFEAADMTGLEHNDPFYMQGCRVRTTTNHSGGIQGGISNGEDILMRIGFKPTATLMIDQQTVNRDGEDARLKGRGRHDACVLPRAVPIVEAMAWLCLCDHYLRQRCQRAL</sequence>
<organism>
    <name type="scientific">Akkermansia muciniphila (strain ATCC BAA-835 / DSM 22959 / JCM 33894 / BCRC 81048 / CCUG 64013 / CIP 107961 / Muc)</name>
    <dbReference type="NCBI Taxonomy" id="349741"/>
    <lineage>
        <taxon>Bacteria</taxon>
        <taxon>Pseudomonadati</taxon>
        <taxon>Verrucomicrobiota</taxon>
        <taxon>Verrucomicrobiia</taxon>
        <taxon>Verrucomicrobiales</taxon>
        <taxon>Akkermansiaceae</taxon>
        <taxon>Akkermansia</taxon>
    </lineage>
</organism>
<feature type="chain" id="PRO_1000115324" description="Chorismate synthase">
    <location>
        <begin position="1"/>
        <end position="361"/>
    </location>
</feature>
<feature type="binding site" evidence="1">
    <location>
        <position position="47"/>
    </location>
    <ligand>
        <name>NADP(+)</name>
        <dbReference type="ChEBI" id="CHEBI:58349"/>
    </ligand>
</feature>
<feature type="binding site" evidence="1">
    <location>
        <begin position="124"/>
        <end position="126"/>
    </location>
    <ligand>
        <name>FMN</name>
        <dbReference type="ChEBI" id="CHEBI:58210"/>
    </ligand>
</feature>
<feature type="binding site" evidence="1">
    <location>
        <position position="286"/>
    </location>
    <ligand>
        <name>FMN</name>
        <dbReference type="ChEBI" id="CHEBI:58210"/>
    </ligand>
</feature>
<feature type="binding site" evidence="1">
    <location>
        <begin position="301"/>
        <end position="305"/>
    </location>
    <ligand>
        <name>FMN</name>
        <dbReference type="ChEBI" id="CHEBI:58210"/>
    </ligand>
</feature>
<feature type="binding site" evidence="1">
    <location>
        <position position="327"/>
    </location>
    <ligand>
        <name>FMN</name>
        <dbReference type="ChEBI" id="CHEBI:58210"/>
    </ligand>
</feature>
<accession>B2UNJ5</accession>